<sequence length="191" mass="21153">MSSESKSSQSEKELSGLVLEQKIKGSRKVSNYLVASMLSIGGVGFLLASFSSYFGRDFLPLGNPSTLIFVPQGLVMGLYGLAAFLLAIYFWRLINIDYGSGVNRFDKNKGVLSLSRRGLFKNIEIEIPIDEIKAVKLEVREGFNPLRRVSLRIKGRKDLPISRVGSPKPLLDLENEGAEIARFLEVNLEGI</sequence>
<protein>
    <recommendedName>
        <fullName evidence="1">Photosystem I assembly protein Ycf4</fullName>
    </recommendedName>
</protein>
<gene>
    <name evidence="1" type="primary">ycf4</name>
    <name type="ordered locus">NATL1_16061</name>
</gene>
<name>YCF4_PROM1</name>
<evidence type="ECO:0000255" key="1">
    <source>
        <dbReference type="HAMAP-Rule" id="MF_00437"/>
    </source>
</evidence>
<reference key="1">
    <citation type="journal article" date="2007" name="PLoS Genet.">
        <title>Patterns and implications of gene gain and loss in the evolution of Prochlorococcus.</title>
        <authorList>
            <person name="Kettler G.C."/>
            <person name="Martiny A.C."/>
            <person name="Huang K."/>
            <person name="Zucker J."/>
            <person name="Coleman M.L."/>
            <person name="Rodrigue S."/>
            <person name="Chen F."/>
            <person name="Lapidus A."/>
            <person name="Ferriera S."/>
            <person name="Johnson J."/>
            <person name="Steglich C."/>
            <person name="Church G.M."/>
            <person name="Richardson P."/>
            <person name="Chisholm S.W."/>
        </authorList>
    </citation>
    <scope>NUCLEOTIDE SEQUENCE [LARGE SCALE GENOMIC DNA]</scope>
    <source>
        <strain>NATL1A</strain>
    </source>
</reference>
<keyword id="KW-0472">Membrane</keyword>
<keyword id="KW-0602">Photosynthesis</keyword>
<keyword id="KW-0793">Thylakoid</keyword>
<keyword id="KW-0812">Transmembrane</keyword>
<keyword id="KW-1133">Transmembrane helix</keyword>
<dbReference type="EMBL" id="CP000553">
    <property type="protein sequence ID" value="ABM76163.1"/>
    <property type="molecule type" value="Genomic_DNA"/>
</dbReference>
<dbReference type="RefSeq" id="WP_011824172.1">
    <property type="nucleotide sequence ID" value="NC_008819.1"/>
</dbReference>
<dbReference type="KEGG" id="pme:NATL1_16061"/>
<dbReference type="eggNOG" id="ENOG502Z7YX">
    <property type="taxonomic scope" value="Bacteria"/>
</dbReference>
<dbReference type="HOGENOM" id="CLU_095465_0_0_3"/>
<dbReference type="Proteomes" id="UP000002592">
    <property type="component" value="Chromosome"/>
</dbReference>
<dbReference type="GO" id="GO:0009522">
    <property type="term" value="C:photosystem I"/>
    <property type="evidence" value="ECO:0007669"/>
    <property type="project" value="InterPro"/>
</dbReference>
<dbReference type="GO" id="GO:0031676">
    <property type="term" value="C:plasma membrane-derived thylakoid membrane"/>
    <property type="evidence" value="ECO:0007669"/>
    <property type="project" value="UniProtKB-SubCell"/>
</dbReference>
<dbReference type="GO" id="GO:0015979">
    <property type="term" value="P:photosynthesis"/>
    <property type="evidence" value="ECO:0007669"/>
    <property type="project" value="UniProtKB-UniRule"/>
</dbReference>
<dbReference type="HAMAP" id="MF_00437">
    <property type="entry name" value="Ycf4"/>
    <property type="match status" value="1"/>
</dbReference>
<dbReference type="InterPro" id="IPR003359">
    <property type="entry name" value="PSI_Ycf4_assembly"/>
</dbReference>
<dbReference type="NCBIfam" id="NF002712">
    <property type="entry name" value="PRK02542.1"/>
    <property type="match status" value="1"/>
</dbReference>
<dbReference type="Pfam" id="PF02392">
    <property type="entry name" value="Ycf4"/>
    <property type="match status" value="1"/>
</dbReference>
<organism>
    <name type="scientific">Prochlorococcus marinus (strain NATL1A)</name>
    <dbReference type="NCBI Taxonomy" id="167555"/>
    <lineage>
        <taxon>Bacteria</taxon>
        <taxon>Bacillati</taxon>
        <taxon>Cyanobacteriota</taxon>
        <taxon>Cyanophyceae</taxon>
        <taxon>Synechococcales</taxon>
        <taxon>Prochlorococcaceae</taxon>
        <taxon>Prochlorococcus</taxon>
    </lineage>
</organism>
<accession>A2C3V3</accession>
<proteinExistence type="inferred from homology"/>
<comment type="function">
    <text evidence="1">Seems to be required for the assembly of the photosystem I complex.</text>
</comment>
<comment type="subcellular location">
    <subcellularLocation>
        <location evidence="1">Cellular thylakoid membrane</location>
        <topology evidence="1">Multi-pass membrane protein</topology>
    </subcellularLocation>
</comment>
<comment type="similarity">
    <text evidence="1">Belongs to the Ycf4 family.</text>
</comment>
<feature type="chain" id="PRO_1000025947" description="Photosystem I assembly protein Ycf4">
    <location>
        <begin position="1"/>
        <end position="191"/>
    </location>
</feature>
<feature type="transmembrane region" description="Helical" evidence="1">
    <location>
        <begin position="34"/>
        <end position="54"/>
    </location>
</feature>
<feature type="transmembrane region" description="Helical" evidence="1">
    <location>
        <begin position="68"/>
        <end position="88"/>
    </location>
</feature>